<protein>
    <recommendedName>
        <fullName evidence="5">Type IV inositol polyphosphate 5-phosphatase 11</fullName>
        <shortName evidence="5">At5PTase11</shortName>
        <ecNumber evidence="2">3.1.3.36</ecNumber>
        <ecNumber evidence="2">3.1.3.86</ecNumber>
    </recommendedName>
</protein>
<accession>Q5EAF2</accession>
<accession>Q9SX81</accession>
<sequence length="334" mass="37580">MPTMGNKNSMCGLKRFPNYKKSPIGSFAKNSSSHDGIKTIEAVNSCSFSRKADLCIRIITWNMNGNVSYEDLVELVGKERKFDLLVVGLQEAPKANVDQLLQTASSPTHELLGKAKLQSVQLYLFGPKNSHTLVKELKAERYSVGGCGGLIGRKKGAVAIRINYDDIKMVFISCHLSAHAKKVDQRNTELRHIANSLLPRDKRKRDLTVWLGDLNYRIQDVSNHPVRSLIQNHLQSVLVSKDQLLQEAERGEIFKGYSEGTLGFKPTYKYNVGSSDYDTSHKIRVPAWTDRILFKIQDTDNIQATLHSYDSIDQVYGSDHKPVKADLCLKWVNS</sequence>
<dbReference type="EC" id="3.1.3.36" evidence="2"/>
<dbReference type="EC" id="3.1.3.86" evidence="2"/>
<dbReference type="EMBL" id="AC007519">
    <property type="protein sequence ID" value="AAD46036.1"/>
    <property type="status" value="ALT_INIT"/>
    <property type="molecule type" value="Genomic_DNA"/>
</dbReference>
<dbReference type="EMBL" id="CP002684">
    <property type="protein sequence ID" value="AEE32179.1"/>
    <property type="molecule type" value="Genomic_DNA"/>
</dbReference>
<dbReference type="EMBL" id="BT020617">
    <property type="protein sequence ID" value="AAW81725.1"/>
    <property type="molecule type" value="mRNA"/>
</dbReference>
<dbReference type="EMBL" id="BT021928">
    <property type="protein sequence ID" value="AAX49377.1"/>
    <property type="molecule type" value="mRNA"/>
</dbReference>
<dbReference type="EMBL" id="AY627297">
    <property type="protein sequence ID" value="AAT45895.1"/>
    <property type="molecule type" value="mRNA"/>
</dbReference>
<dbReference type="PIR" id="D96515">
    <property type="entry name" value="D96515"/>
</dbReference>
<dbReference type="RefSeq" id="NP_175182.2">
    <molecule id="Q5EAF2-1"/>
    <property type="nucleotide sequence ID" value="NM_103644.3"/>
</dbReference>
<dbReference type="SMR" id="Q5EAF2"/>
<dbReference type="BioGRID" id="26385">
    <property type="interactions" value="1"/>
</dbReference>
<dbReference type="FunCoup" id="Q5EAF2">
    <property type="interactions" value="16"/>
</dbReference>
<dbReference type="IntAct" id="Q5EAF2">
    <property type="interactions" value="1"/>
</dbReference>
<dbReference type="STRING" id="3702.Q5EAF2"/>
<dbReference type="iPTMnet" id="Q5EAF2"/>
<dbReference type="PaxDb" id="3702-AT1G47510.1"/>
<dbReference type="EnsemblPlants" id="AT1G47510.1">
    <molecule id="Q5EAF2-1"/>
    <property type="protein sequence ID" value="AT1G47510.1"/>
    <property type="gene ID" value="AT1G47510"/>
</dbReference>
<dbReference type="GeneID" id="841160"/>
<dbReference type="Gramene" id="AT1G47510.1">
    <molecule id="Q5EAF2-1"/>
    <property type="protein sequence ID" value="AT1G47510.1"/>
    <property type="gene ID" value="AT1G47510"/>
</dbReference>
<dbReference type="KEGG" id="ath:AT1G47510"/>
<dbReference type="Araport" id="AT1G47510"/>
<dbReference type="TAIR" id="AT1G47510">
    <property type="gene designation" value="5PTASE11"/>
</dbReference>
<dbReference type="eggNOG" id="KOG0565">
    <property type="taxonomic scope" value="Eukaryota"/>
</dbReference>
<dbReference type="HOGENOM" id="CLU_011711_5_2_1"/>
<dbReference type="InParanoid" id="Q5EAF2"/>
<dbReference type="OMA" id="NSECQHI"/>
<dbReference type="PhylomeDB" id="Q5EAF2"/>
<dbReference type="BioCyc" id="ARA:AT1G47510-MONOMER"/>
<dbReference type="PRO" id="PR:Q5EAF2"/>
<dbReference type="Proteomes" id="UP000006548">
    <property type="component" value="Chromosome 1"/>
</dbReference>
<dbReference type="ExpressionAtlas" id="Q5EAF2">
    <property type="expression patterns" value="baseline and differential"/>
</dbReference>
<dbReference type="GO" id="GO:0005886">
    <property type="term" value="C:plasma membrane"/>
    <property type="evidence" value="ECO:0000314"/>
    <property type="project" value="UniProtKB"/>
</dbReference>
<dbReference type="GO" id="GO:0034485">
    <property type="term" value="F:phosphatidylinositol-3,4,5-trisphosphate 5-phosphatase activity"/>
    <property type="evidence" value="ECO:0000314"/>
    <property type="project" value="TAIR"/>
</dbReference>
<dbReference type="GO" id="GO:0043813">
    <property type="term" value="F:phosphatidylinositol-3,5-bisphosphate 5-phosphatase activity"/>
    <property type="evidence" value="ECO:0000314"/>
    <property type="project" value="TAIR"/>
</dbReference>
<dbReference type="GO" id="GO:0004439">
    <property type="term" value="F:phosphatidylinositol-4,5-bisphosphate 5-phosphatase activity"/>
    <property type="evidence" value="ECO:0000314"/>
    <property type="project" value="UniProtKB"/>
</dbReference>
<dbReference type="GO" id="GO:0046856">
    <property type="term" value="P:phosphatidylinositol dephosphorylation"/>
    <property type="evidence" value="ECO:0000314"/>
    <property type="project" value="UniProtKB"/>
</dbReference>
<dbReference type="GO" id="GO:0009737">
    <property type="term" value="P:response to abscisic acid"/>
    <property type="evidence" value="ECO:0000270"/>
    <property type="project" value="TAIR"/>
</dbReference>
<dbReference type="GO" id="GO:0009733">
    <property type="term" value="P:response to auxin"/>
    <property type="evidence" value="ECO:0000270"/>
    <property type="project" value="TAIR"/>
</dbReference>
<dbReference type="GO" id="GO:0009753">
    <property type="term" value="P:response to jasmonic acid"/>
    <property type="evidence" value="ECO:0000270"/>
    <property type="project" value="TAIR"/>
</dbReference>
<dbReference type="GO" id="GO:0009651">
    <property type="term" value="P:response to salt stress"/>
    <property type="evidence" value="ECO:0000270"/>
    <property type="project" value="UniProtKB"/>
</dbReference>
<dbReference type="FunFam" id="3.60.10.10:FF:000044">
    <property type="entry name" value="Type IV inositol polyphosphate 5-phosphatase 11"/>
    <property type="match status" value="1"/>
</dbReference>
<dbReference type="Gene3D" id="3.60.10.10">
    <property type="entry name" value="Endonuclease/exonuclease/phosphatase"/>
    <property type="match status" value="1"/>
</dbReference>
<dbReference type="InterPro" id="IPR036691">
    <property type="entry name" value="Endo/exonu/phosph_ase_sf"/>
</dbReference>
<dbReference type="InterPro" id="IPR046985">
    <property type="entry name" value="IP5"/>
</dbReference>
<dbReference type="InterPro" id="IPR000300">
    <property type="entry name" value="IPPc"/>
</dbReference>
<dbReference type="PANTHER" id="PTHR11200">
    <property type="entry name" value="INOSITOL 5-PHOSPHATASE"/>
    <property type="match status" value="1"/>
</dbReference>
<dbReference type="PANTHER" id="PTHR11200:SF275">
    <property type="entry name" value="LD06095P"/>
    <property type="match status" value="1"/>
</dbReference>
<dbReference type="Pfam" id="PF22669">
    <property type="entry name" value="Exo_endo_phos2"/>
    <property type="match status" value="1"/>
</dbReference>
<dbReference type="SMART" id="SM00128">
    <property type="entry name" value="IPPc"/>
    <property type="match status" value="1"/>
</dbReference>
<dbReference type="SUPFAM" id="SSF56219">
    <property type="entry name" value="DNase I-like"/>
    <property type="match status" value="1"/>
</dbReference>
<feature type="chain" id="PRO_0000209725" description="Type IV inositol polyphosphate 5-phosphatase 11">
    <location>
        <begin position="1"/>
        <end position="334"/>
    </location>
</feature>
<feature type="region of interest" description="Catalytic 1" evidence="1">
    <location>
        <begin position="206"/>
        <end position="222"/>
    </location>
</feature>
<feature type="region of interest" description="Catalytic 2" evidence="1">
    <location>
        <begin position="282"/>
        <end position="297"/>
    </location>
</feature>
<name>IP5PB_ARATH</name>
<reference key="1">
    <citation type="journal article" date="2000" name="Nature">
        <title>Sequence and analysis of chromosome 1 of the plant Arabidopsis thaliana.</title>
        <authorList>
            <person name="Theologis A."/>
            <person name="Ecker J.R."/>
            <person name="Palm C.J."/>
            <person name="Federspiel N.A."/>
            <person name="Kaul S."/>
            <person name="White O."/>
            <person name="Alonso J."/>
            <person name="Altafi H."/>
            <person name="Araujo R."/>
            <person name="Bowman C.L."/>
            <person name="Brooks S.Y."/>
            <person name="Buehler E."/>
            <person name="Chan A."/>
            <person name="Chao Q."/>
            <person name="Chen H."/>
            <person name="Cheuk R.F."/>
            <person name="Chin C.W."/>
            <person name="Chung M.K."/>
            <person name="Conn L."/>
            <person name="Conway A.B."/>
            <person name="Conway A.R."/>
            <person name="Creasy T.H."/>
            <person name="Dewar K."/>
            <person name="Dunn P."/>
            <person name="Etgu P."/>
            <person name="Feldblyum T.V."/>
            <person name="Feng J.-D."/>
            <person name="Fong B."/>
            <person name="Fujii C.Y."/>
            <person name="Gill J.E."/>
            <person name="Goldsmith A.D."/>
            <person name="Haas B."/>
            <person name="Hansen N.F."/>
            <person name="Hughes B."/>
            <person name="Huizar L."/>
            <person name="Hunter J.L."/>
            <person name="Jenkins J."/>
            <person name="Johnson-Hopson C."/>
            <person name="Khan S."/>
            <person name="Khaykin E."/>
            <person name="Kim C.J."/>
            <person name="Koo H.L."/>
            <person name="Kremenetskaia I."/>
            <person name="Kurtz D.B."/>
            <person name="Kwan A."/>
            <person name="Lam B."/>
            <person name="Langin-Hooper S."/>
            <person name="Lee A."/>
            <person name="Lee J.M."/>
            <person name="Lenz C.A."/>
            <person name="Li J.H."/>
            <person name="Li Y.-P."/>
            <person name="Lin X."/>
            <person name="Liu S.X."/>
            <person name="Liu Z.A."/>
            <person name="Luros J.S."/>
            <person name="Maiti R."/>
            <person name="Marziali A."/>
            <person name="Militscher J."/>
            <person name="Miranda M."/>
            <person name="Nguyen M."/>
            <person name="Nierman W.C."/>
            <person name="Osborne B.I."/>
            <person name="Pai G."/>
            <person name="Peterson J."/>
            <person name="Pham P.K."/>
            <person name="Rizzo M."/>
            <person name="Rooney T."/>
            <person name="Rowley D."/>
            <person name="Sakano H."/>
            <person name="Salzberg S.L."/>
            <person name="Schwartz J.R."/>
            <person name="Shinn P."/>
            <person name="Southwick A.M."/>
            <person name="Sun H."/>
            <person name="Tallon L.J."/>
            <person name="Tambunga G."/>
            <person name="Toriumi M.J."/>
            <person name="Town C.D."/>
            <person name="Utterback T."/>
            <person name="Van Aken S."/>
            <person name="Vaysberg M."/>
            <person name="Vysotskaia V.S."/>
            <person name="Walker M."/>
            <person name="Wu D."/>
            <person name="Yu G."/>
            <person name="Fraser C.M."/>
            <person name="Venter J.C."/>
            <person name="Davis R.W."/>
        </authorList>
    </citation>
    <scope>NUCLEOTIDE SEQUENCE [LARGE SCALE GENOMIC DNA]</scope>
    <source>
        <strain>cv. Columbia</strain>
    </source>
</reference>
<reference key="2">
    <citation type="journal article" date="2017" name="Plant J.">
        <title>Araport11: a complete reannotation of the Arabidopsis thaliana reference genome.</title>
        <authorList>
            <person name="Cheng C.Y."/>
            <person name="Krishnakumar V."/>
            <person name="Chan A.P."/>
            <person name="Thibaud-Nissen F."/>
            <person name="Schobel S."/>
            <person name="Town C.D."/>
        </authorList>
    </citation>
    <scope>GENOME REANNOTATION</scope>
    <source>
        <strain>cv. Columbia</strain>
    </source>
</reference>
<reference key="3">
    <citation type="submission" date="2005-03" db="EMBL/GenBank/DDBJ databases">
        <title>Arabidopsis ORF clones.</title>
        <authorList>
            <person name="Kim C.J."/>
            <person name="Chen H."/>
            <person name="Cheuk R.F."/>
            <person name="Shinn P."/>
            <person name="Ecker J.R."/>
        </authorList>
    </citation>
    <scope>NUCLEOTIDE SEQUENCE [LARGE SCALE MRNA]</scope>
    <source>
        <strain>cv. Columbia</strain>
    </source>
</reference>
<reference key="4">
    <citation type="journal article" date="2004" name="Plant Physiol.">
        <title>Molecular characterization of an Arabidopsis gene encoding a phospholipid-specific inositol polyphosphate 5-phosphatase.</title>
        <authorList>
            <person name="Ercetin M.E."/>
            <person name="Gillaspy G.E."/>
        </authorList>
    </citation>
    <scope>NUCLEOTIDE SEQUENCE [MRNA] OF 4-334</scope>
    <scope>FUNCTION</scope>
    <scope>INDUCTION</scope>
    <scope>TISSUE SPECIFICITY</scope>
    <scope>CATALYTIC ACTIVITY</scope>
</reference>
<reference key="5">
    <citation type="journal article" date="2001" name="Plant Physiol.">
        <title>Molecular characterization of At5PTase1, an inositol phosphatase capable of terminating inositol trisphosphate signaling.</title>
        <authorList>
            <person name="Berdy S.E."/>
            <person name="Kudla J."/>
            <person name="Gruissem W."/>
            <person name="Gillaspy G.E."/>
        </authorList>
    </citation>
    <scope>GENE FAMILY</scope>
</reference>
<reference key="6">
    <citation type="journal article" date="2008" name="Plant Mol. Biol.">
        <title>A phosphatidylinositol phosphate-specific myo-inositol polyphosphate 5-phosphatase required for seedling growth.</title>
        <authorList>
            <person name="Ercetin M.E."/>
            <person name="Ananieva E.A."/>
            <person name="Safaee N.M."/>
            <person name="Torabinejad J."/>
            <person name="Robinson J.Y."/>
            <person name="Gillaspy G.E."/>
        </authorList>
    </citation>
    <scope>DISRUPTION PHENOTYPE</scope>
    <scope>CATALYTIC ACTIVITY</scope>
    <scope>SUBCELLULAR LOCATION</scope>
</reference>
<reference key="7">
    <citation type="journal article" date="2011" name="Plant Physiol.">
        <title>Inositol polyphosphate 5-phosphatase7 regulates the production of reactive oxygen species and salt tolerance in Arabidopsis.</title>
        <authorList>
            <person name="Kaye Y."/>
            <person name="Golani Y."/>
            <person name="Singer Y."/>
            <person name="Leshem Y."/>
            <person name="Cohen G."/>
            <person name="Ercetin M."/>
            <person name="Gillaspy G."/>
            <person name="Levine A."/>
        </authorList>
    </citation>
    <scope>INDUCTION BY SALT</scope>
</reference>
<keyword id="KW-0025">Alternative splicing</keyword>
<keyword id="KW-1003">Cell membrane</keyword>
<keyword id="KW-0378">Hydrolase</keyword>
<keyword id="KW-0472">Membrane</keyword>
<keyword id="KW-1185">Reference proteome</keyword>
<gene>
    <name evidence="6" type="primary">IP5P11</name>
    <name evidence="7" type="ordered locus">At1g47510</name>
    <name evidence="8" type="ORF">F16N3.22</name>
</gene>
<proteinExistence type="evidence at protein level"/>
<evidence type="ECO:0000250" key="1">
    <source>
        <dbReference type="UniProtKB" id="Q84MA2"/>
    </source>
</evidence>
<evidence type="ECO:0000269" key="2">
    <source>
    </source>
</evidence>
<evidence type="ECO:0000269" key="3">
    <source>
    </source>
</evidence>
<evidence type="ECO:0000269" key="4">
    <source>
    </source>
</evidence>
<evidence type="ECO:0000303" key="5">
    <source>
    </source>
</evidence>
<evidence type="ECO:0000305" key="6"/>
<evidence type="ECO:0000312" key="7">
    <source>
        <dbReference type="Araport" id="AT1G47510"/>
    </source>
</evidence>
<evidence type="ECO:0000312" key="8">
    <source>
        <dbReference type="EMBL" id="AAD46036.1"/>
    </source>
</evidence>
<comment type="function">
    <text evidence="2">Has phosphatase activity toward PtdIns(4,5)P2, and in vitro toward PtdIns(3,5)P2 and PtdIns(3,4,5)P3. Cannot dephosphorylate PtdIns(5)P, Ins(1,4,5)P3 and Ins(1,3,4,5)P4.</text>
</comment>
<comment type="catalytic activity">
    <reaction evidence="2 3">
        <text>a 1,2-diacyl-sn-glycero-3-phospho-(1D-myo-inositol-4,5-bisphosphate) + H2O = a 1,2-diacyl-sn-glycero-3-phospho-(1D-myo-inositol 4-phosphate) + phosphate</text>
        <dbReference type="Rhea" id="RHEA:22764"/>
        <dbReference type="ChEBI" id="CHEBI:15377"/>
        <dbReference type="ChEBI" id="CHEBI:43474"/>
        <dbReference type="ChEBI" id="CHEBI:58178"/>
        <dbReference type="ChEBI" id="CHEBI:58456"/>
        <dbReference type="EC" id="3.1.3.36"/>
    </reaction>
</comment>
<comment type="catalytic activity">
    <reaction evidence="2">
        <text>a 1,2-diacyl-sn-glycero-3-phospho-(1D-myo-inositol-3,4,5-trisphosphate) + H2O = a 1,2-diacyl-sn-glycero-3-phospho-(1D-myo-inositol-3,4-bisphosphate) + phosphate</text>
        <dbReference type="Rhea" id="RHEA:25528"/>
        <dbReference type="ChEBI" id="CHEBI:15377"/>
        <dbReference type="ChEBI" id="CHEBI:43474"/>
        <dbReference type="ChEBI" id="CHEBI:57658"/>
        <dbReference type="ChEBI" id="CHEBI:57836"/>
        <dbReference type="EC" id="3.1.3.86"/>
    </reaction>
</comment>
<comment type="subcellular location">
    <subcellularLocation>
        <location>Cell membrane</location>
        <topology evidence="3">Peripheral membrane protein</topology>
    </subcellularLocation>
</comment>
<comment type="alternative products">
    <event type="alternative splicing"/>
    <isoform>
        <id>Q5EAF2-1</id>
        <name>1</name>
        <sequence type="displayed"/>
    </isoform>
    <text>A number of isoforms are produced. According to EST sequences.</text>
</comment>
<comment type="tissue specificity">
    <text evidence="2">Expressed ubiquitously.</text>
</comment>
<comment type="induction">
    <text evidence="2 4">Induced by abscisic acid (ABA), jasmonic acid (JA) and auxin (PubMed:15181205). Up-regulated in seedlings and down-regulated in mature plant by salt stress (PubMed:21677096).</text>
</comment>
<comment type="disruption phenotype">
    <text evidence="3">Alterations in germination and in dark-growth seedlings. Elevated level of Ins(1,4,5)P3 and InsP2 levels.</text>
</comment>
<comment type="similarity">
    <text evidence="6">Belongs to the inositol polyphosphate 5-phosphatase family.</text>
</comment>
<comment type="caution">
    <text evidence="6">It is uncertain whether Met-1 or Met-4 is the initiator.</text>
</comment>
<comment type="sequence caution" evidence="6">
    <conflict type="erroneous initiation">
        <sequence resource="EMBL-CDS" id="AAD46036"/>
    </conflict>
    <text>Truncated N-terminus.</text>
</comment>
<organism>
    <name type="scientific">Arabidopsis thaliana</name>
    <name type="common">Mouse-ear cress</name>
    <dbReference type="NCBI Taxonomy" id="3702"/>
    <lineage>
        <taxon>Eukaryota</taxon>
        <taxon>Viridiplantae</taxon>
        <taxon>Streptophyta</taxon>
        <taxon>Embryophyta</taxon>
        <taxon>Tracheophyta</taxon>
        <taxon>Spermatophyta</taxon>
        <taxon>Magnoliopsida</taxon>
        <taxon>eudicotyledons</taxon>
        <taxon>Gunneridae</taxon>
        <taxon>Pentapetalae</taxon>
        <taxon>rosids</taxon>
        <taxon>malvids</taxon>
        <taxon>Brassicales</taxon>
        <taxon>Brassicaceae</taxon>
        <taxon>Camelineae</taxon>
        <taxon>Arabidopsis</taxon>
    </lineage>
</organism>